<feature type="chain" id="PRO_1000055896" description="Large ribosomal subunit protein bL17">
    <location>
        <begin position="1"/>
        <end position="131"/>
    </location>
</feature>
<dbReference type="EMBL" id="CP000411">
    <property type="protein sequence ID" value="ABJ56563.1"/>
    <property type="molecule type" value="Genomic_DNA"/>
</dbReference>
<dbReference type="RefSeq" id="WP_002818480.1">
    <property type="nucleotide sequence ID" value="NC_008528.1"/>
</dbReference>
<dbReference type="SMR" id="Q04G59"/>
<dbReference type="STRING" id="203123.OEOE_0621"/>
<dbReference type="GeneID" id="75065443"/>
<dbReference type="KEGG" id="ooe:OEOE_0621"/>
<dbReference type="eggNOG" id="COG0203">
    <property type="taxonomic scope" value="Bacteria"/>
</dbReference>
<dbReference type="HOGENOM" id="CLU_074407_2_2_9"/>
<dbReference type="Proteomes" id="UP000000774">
    <property type="component" value="Chromosome"/>
</dbReference>
<dbReference type="GO" id="GO:0022625">
    <property type="term" value="C:cytosolic large ribosomal subunit"/>
    <property type="evidence" value="ECO:0007669"/>
    <property type="project" value="TreeGrafter"/>
</dbReference>
<dbReference type="GO" id="GO:0003735">
    <property type="term" value="F:structural constituent of ribosome"/>
    <property type="evidence" value="ECO:0007669"/>
    <property type="project" value="InterPro"/>
</dbReference>
<dbReference type="GO" id="GO:0006412">
    <property type="term" value="P:translation"/>
    <property type="evidence" value="ECO:0007669"/>
    <property type="project" value="UniProtKB-UniRule"/>
</dbReference>
<dbReference type="Gene3D" id="3.90.1030.10">
    <property type="entry name" value="Ribosomal protein L17"/>
    <property type="match status" value="1"/>
</dbReference>
<dbReference type="HAMAP" id="MF_01368">
    <property type="entry name" value="Ribosomal_bL17"/>
    <property type="match status" value="1"/>
</dbReference>
<dbReference type="InterPro" id="IPR000456">
    <property type="entry name" value="Ribosomal_bL17"/>
</dbReference>
<dbReference type="InterPro" id="IPR047859">
    <property type="entry name" value="Ribosomal_bL17_CS"/>
</dbReference>
<dbReference type="InterPro" id="IPR036373">
    <property type="entry name" value="Ribosomal_bL17_sf"/>
</dbReference>
<dbReference type="NCBIfam" id="TIGR00059">
    <property type="entry name" value="L17"/>
    <property type="match status" value="1"/>
</dbReference>
<dbReference type="PANTHER" id="PTHR14413:SF16">
    <property type="entry name" value="LARGE RIBOSOMAL SUBUNIT PROTEIN BL17M"/>
    <property type="match status" value="1"/>
</dbReference>
<dbReference type="PANTHER" id="PTHR14413">
    <property type="entry name" value="RIBOSOMAL PROTEIN L17"/>
    <property type="match status" value="1"/>
</dbReference>
<dbReference type="Pfam" id="PF01196">
    <property type="entry name" value="Ribosomal_L17"/>
    <property type="match status" value="1"/>
</dbReference>
<dbReference type="SUPFAM" id="SSF64263">
    <property type="entry name" value="Prokaryotic ribosomal protein L17"/>
    <property type="match status" value="1"/>
</dbReference>
<dbReference type="PROSITE" id="PS01167">
    <property type="entry name" value="RIBOSOMAL_L17"/>
    <property type="match status" value="1"/>
</dbReference>
<sequence>MGYRKLQRTKSQRKALLRDLTTNLILNGKIQTTEARAKEVRRQAEKMITLGKRGDLAARRLAATYLRDVEDENKIKNATNAEDIVEQKAVKTLFSDVAPRFKSRNGGYTRIYKLGQRRGDAAPMALLEFVD</sequence>
<protein>
    <recommendedName>
        <fullName evidence="1">Large ribosomal subunit protein bL17</fullName>
    </recommendedName>
    <alternativeName>
        <fullName evidence="2">50S ribosomal protein L17</fullName>
    </alternativeName>
</protein>
<comment type="subunit">
    <text evidence="1">Part of the 50S ribosomal subunit. Contacts protein L32.</text>
</comment>
<comment type="similarity">
    <text evidence="1">Belongs to the bacterial ribosomal protein bL17 family.</text>
</comment>
<proteinExistence type="inferred from homology"/>
<reference key="1">
    <citation type="journal article" date="2006" name="Proc. Natl. Acad. Sci. U.S.A.">
        <title>Comparative genomics of the lactic acid bacteria.</title>
        <authorList>
            <person name="Makarova K.S."/>
            <person name="Slesarev A."/>
            <person name="Wolf Y.I."/>
            <person name="Sorokin A."/>
            <person name="Mirkin B."/>
            <person name="Koonin E.V."/>
            <person name="Pavlov A."/>
            <person name="Pavlova N."/>
            <person name="Karamychev V."/>
            <person name="Polouchine N."/>
            <person name="Shakhova V."/>
            <person name="Grigoriev I."/>
            <person name="Lou Y."/>
            <person name="Rohksar D."/>
            <person name="Lucas S."/>
            <person name="Huang K."/>
            <person name="Goodstein D.M."/>
            <person name="Hawkins T."/>
            <person name="Plengvidhya V."/>
            <person name="Welker D."/>
            <person name="Hughes J."/>
            <person name="Goh Y."/>
            <person name="Benson A."/>
            <person name="Baldwin K."/>
            <person name="Lee J.-H."/>
            <person name="Diaz-Muniz I."/>
            <person name="Dosti B."/>
            <person name="Smeianov V."/>
            <person name="Wechter W."/>
            <person name="Barabote R."/>
            <person name="Lorca G."/>
            <person name="Altermann E."/>
            <person name="Barrangou R."/>
            <person name="Ganesan B."/>
            <person name="Xie Y."/>
            <person name="Rawsthorne H."/>
            <person name="Tamir D."/>
            <person name="Parker C."/>
            <person name="Breidt F."/>
            <person name="Broadbent J.R."/>
            <person name="Hutkins R."/>
            <person name="O'Sullivan D."/>
            <person name="Steele J."/>
            <person name="Unlu G."/>
            <person name="Saier M.H. Jr."/>
            <person name="Klaenhammer T."/>
            <person name="Richardson P."/>
            <person name="Kozyavkin S."/>
            <person name="Weimer B.C."/>
            <person name="Mills D.A."/>
        </authorList>
    </citation>
    <scope>NUCLEOTIDE SEQUENCE [LARGE SCALE GENOMIC DNA]</scope>
    <source>
        <strain>ATCC BAA-331 / PSU-1</strain>
    </source>
</reference>
<name>RL17_OENOB</name>
<accession>Q04G59</accession>
<organism>
    <name type="scientific">Oenococcus oeni (strain ATCC BAA-331 / PSU-1)</name>
    <dbReference type="NCBI Taxonomy" id="203123"/>
    <lineage>
        <taxon>Bacteria</taxon>
        <taxon>Bacillati</taxon>
        <taxon>Bacillota</taxon>
        <taxon>Bacilli</taxon>
        <taxon>Lactobacillales</taxon>
        <taxon>Lactobacillaceae</taxon>
        <taxon>Oenococcus</taxon>
    </lineage>
</organism>
<evidence type="ECO:0000255" key="1">
    <source>
        <dbReference type="HAMAP-Rule" id="MF_01368"/>
    </source>
</evidence>
<evidence type="ECO:0000305" key="2"/>
<keyword id="KW-1185">Reference proteome</keyword>
<keyword id="KW-0687">Ribonucleoprotein</keyword>
<keyword id="KW-0689">Ribosomal protein</keyword>
<gene>
    <name evidence="1" type="primary">rplQ</name>
    <name type="ordered locus">OEOE_0621</name>
</gene>